<proteinExistence type="inferred from homology"/>
<sequence>MLGPAVLGLSLWALLQPGAGAPLCLSQQLRMKGDYMLGGLFPLGEAEEAGFRSRTRPSSPVCTRFSSNGLLWALAMKMAVEEINNKSDLLPGLRLGYDLFDTCSEPVVAMKPSLMFLAKAGSRDIAAYCNYTQYQPRVLAVIGPHSSELAMVTGKFFSFFLMPQVSYGASMELLSARETFPSFFRTVPSDRVQLTAAAELLQEFGWNWVAALGSDDEYGRQGLSIFSALAAARGICIAHEGLVPLPRADDSRLGKVQDVLHQVNQSSVQVVLLFASVHAAHALFNYSISSRLSPKVWVASEAWLTSDLVMGLPGMAQMGTVLGFLQRGAQLHEFPQYVKTHLALAADPAFCSALGEREQGLEEDVVGQRCPQCDCITLQNVSAGLNHHQTFSVYAAVYSVAQALHNTLQCNASGCPAQDPVKPWQLLENMYNLTFHAGGLMLRFDSSGNVDMEYDLKLWVWQGSVPRLHDVGRFNGSLRTERLKIRWHTSDNQKPVSRCSRQCQEGQVRRVKGFHSCCYDCVDCEAGSYRQNPDDVTCTSCGQDEWSPERSTRCFHRRSRFLAWGEPAVLLLLLLLSLALGLVLAALGLFVHHRDSPLVQASGGPLACFGLVCLGLVCLSVLLFPGQPSPAQCLAQQPLSHLPLTGCLSTLFLQAAEIFVESELPLSWADRLSGCLRGPWAWLVVLLAMLVEVALCTWYLVAFPPEVVTDWHMLPTEALVHCRTRSWVSFGLAHATNATLAFLCFLGTFLVRSQPGRYNRARGLTFAMLAYFITWVSFVPLLANVQVVLRPAVQMGALLLCVLGILAAFHLPRCYLLIRQPGLNTPEFFLGGGPGDAQGRNDGDTGNQGKHE</sequence>
<gene>
    <name type="primary">TAS1R3</name>
    <name type="synonym">T1R3</name>
</gene>
<organism>
    <name type="scientific">Gorilla gorilla gorilla</name>
    <name type="common">Western lowland gorilla</name>
    <dbReference type="NCBI Taxonomy" id="9595"/>
    <lineage>
        <taxon>Eukaryota</taxon>
        <taxon>Metazoa</taxon>
        <taxon>Chordata</taxon>
        <taxon>Craniata</taxon>
        <taxon>Vertebrata</taxon>
        <taxon>Euteleostomi</taxon>
        <taxon>Mammalia</taxon>
        <taxon>Eutheria</taxon>
        <taxon>Euarchontoglires</taxon>
        <taxon>Primates</taxon>
        <taxon>Haplorrhini</taxon>
        <taxon>Catarrhini</taxon>
        <taxon>Hominidae</taxon>
        <taxon>Gorilla</taxon>
    </lineage>
</organism>
<dbReference type="EMBL" id="AF545574">
    <property type="protein sequence ID" value="AAQ11897.1"/>
    <property type="molecule type" value="Genomic_DNA"/>
</dbReference>
<dbReference type="SMR" id="Q717C1"/>
<dbReference type="FunCoup" id="Q717C1">
    <property type="interactions" value="170"/>
</dbReference>
<dbReference type="STRING" id="9593.ENSGGOP00000023446"/>
<dbReference type="GlyCosmos" id="Q717C1">
    <property type="glycosylation" value="8 sites, No reported glycans"/>
</dbReference>
<dbReference type="eggNOG" id="KOG1056">
    <property type="taxonomic scope" value="Eukaryota"/>
</dbReference>
<dbReference type="InParanoid" id="Q717C1"/>
<dbReference type="Proteomes" id="UP000001519">
    <property type="component" value="Unplaced"/>
</dbReference>
<dbReference type="GO" id="GO:0005886">
    <property type="term" value="C:plasma membrane"/>
    <property type="evidence" value="ECO:0000318"/>
    <property type="project" value="GO_Central"/>
</dbReference>
<dbReference type="GO" id="GO:0004930">
    <property type="term" value="F:G protein-coupled receptor activity"/>
    <property type="evidence" value="ECO:0000318"/>
    <property type="project" value="GO_Central"/>
</dbReference>
<dbReference type="GO" id="GO:0001582">
    <property type="term" value="P:detection of chemical stimulus involved in sensory perception of sweet taste"/>
    <property type="evidence" value="ECO:0007669"/>
    <property type="project" value="GOC"/>
</dbReference>
<dbReference type="GO" id="GO:0050916">
    <property type="term" value="P:sensory perception of sweet taste"/>
    <property type="evidence" value="ECO:0000318"/>
    <property type="project" value="GO_Central"/>
</dbReference>
<dbReference type="GO" id="GO:0050917">
    <property type="term" value="P:sensory perception of umami taste"/>
    <property type="evidence" value="ECO:0000318"/>
    <property type="project" value="GO_Central"/>
</dbReference>
<dbReference type="CDD" id="cd15290">
    <property type="entry name" value="7tmC_TAS1R3"/>
    <property type="match status" value="1"/>
</dbReference>
<dbReference type="CDD" id="cd06363">
    <property type="entry name" value="PBP1_taste_receptor"/>
    <property type="match status" value="1"/>
</dbReference>
<dbReference type="FunFam" id="3.40.50.2300:FF:000016">
    <property type="entry name" value="Taste 1 receptor member 2"/>
    <property type="match status" value="1"/>
</dbReference>
<dbReference type="FunFam" id="2.10.50.30:FF:000004">
    <property type="entry name" value="Taste receptor type 1 member 3-like protein"/>
    <property type="match status" value="1"/>
</dbReference>
<dbReference type="Gene3D" id="3.40.50.2300">
    <property type="match status" value="2"/>
</dbReference>
<dbReference type="Gene3D" id="2.10.50.30">
    <property type="entry name" value="GPCR, family 3, nine cysteines domain"/>
    <property type="match status" value="1"/>
</dbReference>
<dbReference type="InterPro" id="IPR001828">
    <property type="entry name" value="ANF_lig-bd_rcpt"/>
</dbReference>
<dbReference type="InterPro" id="IPR000337">
    <property type="entry name" value="GPCR_3"/>
</dbReference>
<dbReference type="InterPro" id="IPR011500">
    <property type="entry name" value="GPCR_3_9-Cys_dom"/>
</dbReference>
<dbReference type="InterPro" id="IPR038550">
    <property type="entry name" value="GPCR_3_9-Cys_sf"/>
</dbReference>
<dbReference type="InterPro" id="IPR017978">
    <property type="entry name" value="GPCR_3_C"/>
</dbReference>
<dbReference type="InterPro" id="IPR000068">
    <property type="entry name" value="GPCR_3_Ca_sens_rcpt-rel"/>
</dbReference>
<dbReference type="InterPro" id="IPR017979">
    <property type="entry name" value="GPCR_3_CS"/>
</dbReference>
<dbReference type="InterPro" id="IPR028082">
    <property type="entry name" value="Peripla_BP_I"/>
</dbReference>
<dbReference type="PANTHER" id="PTHR24061">
    <property type="entry name" value="CALCIUM-SENSING RECEPTOR-RELATED"/>
    <property type="match status" value="1"/>
</dbReference>
<dbReference type="PANTHER" id="PTHR24061:SF435">
    <property type="entry name" value="TASTE RECEPTOR TYPE 1 MEMBER 3"/>
    <property type="match status" value="1"/>
</dbReference>
<dbReference type="Pfam" id="PF00003">
    <property type="entry name" value="7tm_3"/>
    <property type="match status" value="1"/>
</dbReference>
<dbReference type="Pfam" id="PF01094">
    <property type="entry name" value="ANF_receptor"/>
    <property type="match status" value="1"/>
</dbReference>
<dbReference type="Pfam" id="PF07562">
    <property type="entry name" value="NCD3G"/>
    <property type="match status" value="1"/>
</dbReference>
<dbReference type="PRINTS" id="PR00248">
    <property type="entry name" value="GPCRMGR"/>
</dbReference>
<dbReference type="SUPFAM" id="SSF53822">
    <property type="entry name" value="Periplasmic binding protein-like I"/>
    <property type="match status" value="1"/>
</dbReference>
<dbReference type="PROSITE" id="PS00980">
    <property type="entry name" value="G_PROTEIN_RECEP_F3_2"/>
    <property type="match status" value="1"/>
</dbReference>
<dbReference type="PROSITE" id="PS50259">
    <property type="entry name" value="G_PROTEIN_RECEP_F3_4"/>
    <property type="match status" value="1"/>
</dbReference>
<protein>
    <recommendedName>
        <fullName>Taste receptor type 1 member 3</fullName>
    </recommendedName>
    <alternativeName>
        <fullName>Sweet taste receptor T1R3</fullName>
    </alternativeName>
</protein>
<keyword id="KW-1003">Cell membrane</keyword>
<keyword id="KW-0297">G-protein coupled receptor</keyword>
<keyword id="KW-0325">Glycoprotein</keyword>
<keyword id="KW-0472">Membrane</keyword>
<keyword id="KW-0675">Receptor</keyword>
<keyword id="KW-1185">Reference proteome</keyword>
<keyword id="KW-0732">Signal</keyword>
<keyword id="KW-0807">Transducer</keyword>
<keyword id="KW-0812">Transmembrane</keyword>
<keyword id="KW-1133">Transmembrane helix</keyword>
<comment type="function">
    <text evidence="1">Putative taste receptor. TAS1R1/TAS1R3 responds to the umami taste stimulus (the taste of monosodium glutamate). TAS1R2/TAS1R3 recognizes diverse natural and synthetic sweeteners. TAS1R3 is essential for the recognition and response to the disaccharide trehalose (By similarity). Sequence differences within and between species can significantly influence the selectivity and specificity of taste responses (By similarity).</text>
</comment>
<comment type="subunit">
    <text evidence="1">Forms homodimers or heterodimers with TAS1R1 and TAS1R2.</text>
</comment>
<comment type="subcellular location">
    <subcellularLocation>
        <location>Cell membrane</location>
        <topology>Multi-pass membrane protein</topology>
    </subcellularLocation>
</comment>
<comment type="similarity">
    <text evidence="4">Belongs to the G-protein coupled receptor 3 family. TAS1R subfamily.</text>
</comment>
<evidence type="ECO:0000250" key="1"/>
<evidence type="ECO:0000255" key="2"/>
<evidence type="ECO:0000256" key="3">
    <source>
        <dbReference type="SAM" id="MobiDB-lite"/>
    </source>
</evidence>
<evidence type="ECO:0000305" key="4"/>
<accession>Q717C1</accession>
<name>TS1R3_GORGO</name>
<reference key="1">
    <citation type="submission" date="2002-09" db="EMBL/GenBank/DDBJ databases">
        <title>Analysis of the T1R taste receptor genes in primates.</title>
        <authorList>
            <person name="Li X."/>
            <person name="Reed D.R."/>
            <person name="Tordoff M.G."/>
            <person name="Bachmanov A.A."/>
            <person name="Mascioli K.J."/>
            <person name="Bak G."/>
            <person name="Li W."/>
            <person name="Beauchamp G.K."/>
        </authorList>
    </citation>
    <scope>NUCLEOTIDE SEQUENCE [GENOMIC DNA]</scope>
</reference>
<feature type="signal peptide" evidence="2">
    <location>
        <begin position="1"/>
        <end position="20"/>
    </location>
</feature>
<feature type="chain" id="PRO_0000012960" description="Taste receptor type 1 member 3">
    <location>
        <begin position="21"/>
        <end position="852"/>
    </location>
</feature>
<feature type="topological domain" description="Extracellular" evidence="2">
    <location>
        <begin position="21"/>
        <end position="570"/>
    </location>
</feature>
<feature type="transmembrane region" description="Helical; Name=1" evidence="2">
    <location>
        <begin position="571"/>
        <end position="591"/>
    </location>
</feature>
<feature type="topological domain" description="Cytoplasmic" evidence="2">
    <location>
        <begin position="592"/>
        <end position="603"/>
    </location>
</feature>
<feature type="transmembrane region" description="Helical; Name=2" evidence="2">
    <location>
        <begin position="604"/>
        <end position="624"/>
    </location>
</feature>
<feature type="topological domain" description="Extracellular" evidence="2">
    <location>
        <begin position="625"/>
        <end position="639"/>
    </location>
</feature>
<feature type="transmembrane region" description="Helical; Name=3" evidence="2">
    <location>
        <begin position="640"/>
        <end position="660"/>
    </location>
</feature>
<feature type="topological domain" description="Cytoplasmic" evidence="2">
    <location>
        <begin position="661"/>
        <end position="682"/>
    </location>
</feature>
<feature type="transmembrane region" description="Helical; Name=4" evidence="2">
    <location>
        <begin position="683"/>
        <end position="703"/>
    </location>
</feature>
<feature type="topological domain" description="Extracellular" evidence="2">
    <location>
        <begin position="704"/>
        <end position="729"/>
    </location>
</feature>
<feature type="transmembrane region" description="Helical; Name=5" evidence="2">
    <location>
        <begin position="730"/>
        <end position="750"/>
    </location>
</feature>
<feature type="topological domain" description="Cytoplasmic" evidence="2">
    <location>
        <begin position="751"/>
        <end position="762"/>
    </location>
</feature>
<feature type="transmembrane region" description="Helical; Name=6" evidence="2">
    <location>
        <begin position="763"/>
        <end position="783"/>
    </location>
</feature>
<feature type="topological domain" description="Extracellular" evidence="2">
    <location>
        <begin position="784"/>
        <end position="791"/>
    </location>
</feature>
<feature type="transmembrane region" description="Helical; Name=7" evidence="2">
    <location>
        <begin position="792"/>
        <end position="812"/>
    </location>
</feature>
<feature type="topological domain" description="Cytoplasmic" evidence="2">
    <location>
        <begin position="813"/>
        <end position="852"/>
    </location>
</feature>
<feature type="region of interest" description="Disordered" evidence="3">
    <location>
        <begin position="833"/>
        <end position="852"/>
    </location>
</feature>
<feature type="compositionally biased region" description="Basic and acidic residues" evidence="3">
    <location>
        <begin position="839"/>
        <end position="852"/>
    </location>
</feature>
<feature type="glycosylation site" description="N-linked (GlcNAc...) asparagine" evidence="2">
    <location>
        <position position="85"/>
    </location>
</feature>
<feature type="glycosylation site" description="N-linked (GlcNAc...) asparagine" evidence="2">
    <location>
        <position position="130"/>
    </location>
</feature>
<feature type="glycosylation site" description="N-linked (GlcNAc...) asparagine" evidence="2">
    <location>
        <position position="264"/>
    </location>
</feature>
<feature type="glycosylation site" description="N-linked (GlcNAc...) asparagine" evidence="2">
    <location>
        <position position="285"/>
    </location>
</feature>
<feature type="glycosylation site" description="N-linked (GlcNAc...) asparagine" evidence="2">
    <location>
        <position position="380"/>
    </location>
</feature>
<feature type="glycosylation site" description="N-linked (GlcNAc...) asparagine" evidence="2">
    <location>
        <position position="411"/>
    </location>
</feature>
<feature type="glycosylation site" description="N-linked (GlcNAc...) asparagine" evidence="2">
    <location>
        <position position="432"/>
    </location>
</feature>
<feature type="glycosylation site" description="N-linked (GlcNAc...) asparagine" evidence="2">
    <location>
        <position position="475"/>
    </location>
</feature>